<accession>Q9CND8</accession>
<proteinExistence type="predicted"/>
<dbReference type="EMBL" id="AE004439">
    <property type="protein sequence ID" value="AAK02578.1"/>
    <property type="molecule type" value="Genomic_DNA"/>
</dbReference>
<dbReference type="SMR" id="Q9CND8"/>
<dbReference type="STRING" id="272843.PM0494"/>
<dbReference type="EnsemblBacteria" id="AAK02578">
    <property type="protein sequence ID" value="AAK02578"/>
    <property type="gene ID" value="PM0494"/>
</dbReference>
<dbReference type="KEGG" id="pmu:PM0494"/>
<dbReference type="HOGENOM" id="CLU_2396975_0_0_6"/>
<dbReference type="Proteomes" id="UP000000809">
    <property type="component" value="Chromosome"/>
</dbReference>
<name>Y494_PASMU</name>
<protein>
    <recommendedName>
        <fullName>Uncharacterized protein PM0494</fullName>
    </recommendedName>
</protein>
<gene>
    <name type="ordered locus">PM0494</name>
</gene>
<keyword id="KW-1185">Reference proteome</keyword>
<feature type="chain" id="PRO_0000216295" description="Uncharacterized protein PM0494">
    <location>
        <begin position="1"/>
        <end position="93"/>
    </location>
</feature>
<sequence length="93" mass="10469">MTPNCAKELVTLSAAHKSFKDYKPQNNYDSIVYSDFKEVEELYGEAQSRRMEHLAKQALLDISTHEPVENAVTLTRITIGALKGDETAKAQLR</sequence>
<organism>
    <name type="scientific">Pasteurella multocida (strain Pm70)</name>
    <dbReference type="NCBI Taxonomy" id="272843"/>
    <lineage>
        <taxon>Bacteria</taxon>
        <taxon>Pseudomonadati</taxon>
        <taxon>Pseudomonadota</taxon>
        <taxon>Gammaproteobacteria</taxon>
        <taxon>Pasteurellales</taxon>
        <taxon>Pasteurellaceae</taxon>
        <taxon>Pasteurella</taxon>
    </lineage>
</organism>
<reference key="1">
    <citation type="journal article" date="2001" name="Proc. Natl. Acad. Sci. U.S.A.">
        <title>Complete genomic sequence of Pasteurella multocida Pm70.</title>
        <authorList>
            <person name="May B.J."/>
            <person name="Zhang Q."/>
            <person name="Li L.L."/>
            <person name="Paustian M.L."/>
            <person name="Whittam T.S."/>
            <person name="Kapur V."/>
        </authorList>
    </citation>
    <scope>NUCLEOTIDE SEQUENCE [LARGE SCALE GENOMIC DNA]</scope>
    <source>
        <strain>Pm70</strain>
    </source>
</reference>